<organism>
    <name type="scientific">Staphylococcus aureus</name>
    <dbReference type="NCBI Taxonomy" id="1280"/>
    <lineage>
        <taxon>Bacteria</taxon>
        <taxon>Bacillati</taxon>
        <taxon>Bacillota</taxon>
        <taxon>Bacilli</taxon>
        <taxon>Bacillales</taxon>
        <taxon>Staphylococcaceae</taxon>
        <taxon>Staphylococcus</taxon>
    </lineage>
</organism>
<dbReference type="EMBL" id="L14020">
    <property type="protein sequence ID" value="AAA21183.1"/>
    <property type="molecule type" value="Genomic_DNA"/>
</dbReference>
<dbReference type="RefSeq" id="WP_000369214.1">
    <property type="nucleotide sequence ID" value="NZ_WJUF01000012.1"/>
</dbReference>
<dbReference type="SMR" id="P68262"/>
<dbReference type="GeneID" id="86196939"/>
<dbReference type="OMA" id="WSHTEIT"/>
<dbReference type="EvolutionaryTrace" id="P68262"/>
<dbReference type="GO" id="GO:0005737">
    <property type="term" value="C:cytoplasm"/>
    <property type="evidence" value="ECO:0007669"/>
    <property type="project" value="UniProtKB-SubCell"/>
</dbReference>
<dbReference type="GO" id="GO:0003677">
    <property type="term" value="F:DNA binding"/>
    <property type="evidence" value="ECO:0007669"/>
    <property type="project" value="UniProtKB-KW"/>
</dbReference>
<dbReference type="GO" id="GO:0045892">
    <property type="term" value="P:negative regulation of DNA-templated transcription"/>
    <property type="evidence" value="ECO:0007669"/>
    <property type="project" value="InterPro"/>
</dbReference>
<dbReference type="GO" id="GO:0046677">
    <property type="term" value="P:response to antibiotic"/>
    <property type="evidence" value="ECO:0007669"/>
    <property type="project" value="UniProtKB-KW"/>
</dbReference>
<dbReference type="Gene3D" id="1.10.4040.10">
    <property type="entry name" value="Penicillinase repressor domain"/>
    <property type="match status" value="1"/>
</dbReference>
<dbReference type="Gene3D" id="1.10.10.10">
    <property type="entry name" value="Winged helix-like DNA-binding domain superfamily/Winged helix DNA-binding domain"/>
    <property type="match status" value="1"/>
</dbReference>
<dbReference type="InterPro" id="IPR005650">
    <property type="entry name" value="BlaI_family"/>
</dbReference>
<dbReference type="InterPro" id="IPR036388">
    <property type="entry name" value="WH-like_DNA-bd_sf"/>
</dbReference>
<dbReference type="InterPro" id="IPR036390">
    <property type="entry name" value="WH_DNA-bd_sf"/>
</dbReference>
<dbReference type="NCBIfam" id="NF000243">
    <property type="entry name" value="MecI_of_mecA"/>
    <property type="match status" value="1"/>
</dbReference>
<dbReference type="Pfam" id="PF03965">
    <property type="entry name" value="Penicillinase_R"/>
    <property type="match status" value="1"/>
</dbReference>
<dbReference type="PIRSF" id="PIRSF019455">
    <property type="entry name" value="CopR_AtkY"/>
    <property type="match status" value="1"/>
</dbReference>
<dbReference type="SUPFAM" id="SSF46785">
    <property type="entry name" value="Winged helix' DNA-binding domain"/>
    <property type="match status" value="1"/>
</dbReference>
<comment type="function">
    <text evidence="1">Transcriptional repressor that constitutively blocks the transcription of the gene for the penicillin-binding protein MecA. Binds DNA as a dimer (By similarity).</text>
</comment>
<comment type="subunit">
    <text evidence="1">Monomer and homodimer.</text>
</comment>
<comment type="subcellular location">
    <subcellularLocation>
        <location evidence="2">Cytoplasm</location>
    </subcellularLocation>
</comment>
<comment type="PTM">
    <text evidence="1">Upon exposure to beta-lactams, proteolytic cleavage at a single site impairs dimerization and abolishes repressor activity.</text>
</comment>
<comment type="similarity">
    <text evidence="2">Belongs to the BlaI transcriptional regulatory family.</text>
</comment>
<keyword id="KW-0046">Antibiotic resistance</keyword>
<keyword id="KW-0963">Cytoplasm</keyword>
<keyword id="KW-0238">DNA-binding</keyword>
<keyword id="KW-0678">Repressor</keyword>
<keyword id="KW-0804">Transcription</keyword>
<keyword id="KW-0805">Transcription regulation</keyword>
<name>MECI_STAAU</name>
<reference key="1">
    <citation type="journal article" date="1994" name="Antimicrob. Agents Chemother.">
        <title>Dissemination among staphylococci of DNA sequences associated with methicillin resistance.</title>
        <authorList>
            <person name="Archer G.L."/>
            <person name="Niemeyer D.M."/>
            <person name="Thanassi J.A."/>
            <person name="Pucci M.J."/>
        </authorList>
    </citation>
    <scope>NUCLEOTIDE SEQUENCE [GENOMIC DNA]</scope>
    <source>
        <strain>BMS-1</strain>
    </source>
</reference>
<gene>
    <name type="primary">mecI</name>
</gene>
<protein>
    <recommendedName>
        <fullName>Methicillin resistance regulatory protein MecI</fullName>
    </recommendedName>
</protein>
<evidence type="ECO:0000250" key="1"/>
<evidence type="ECO:0000305" key="2"/>
<feature type="chain" id="PRO_0000062798" description="Methicillin resistance regulatory protein MecI">
    <location>
        <begin position="1"/>
        <end position="123"/>
    </location>
</feature>
<feature type="DNA-binding region" description="H-T-H motif" evidence="1">
    <location>
        <begin position="7"/>
        <end position="71"/>
    </location>
</feature>
<feature type="region of interest" description="Important for dimerization" evidence="1">
    <location>
        <begin position="74"/>
        <end position="123"/>
    </location>
</feature>
<feature type="site" description="Cleavage" evidence="1">
    <location>
        <begin position="101"/>
        <end position="102"/>
    </location>
</feature>
<accession>P68262</accession>
<accession>P26598</accession>
<proteinExistence type="inferred from homology"/>
<sequence>MDNKTYEISSAEWEVMNIIWMKKYASANNIIEEIQMQKDWSPKTIRTLITRLYKKGFIDRKKDNKIFQYYSLVEESDIKYKTSKNFINKVYKGGFNSLVLNFVEKEDLSQDEIEELRNILNKK</sequence>